<feature type="chain" id="PRO_0000412740" description="3'-5' ssDNA/RNA exonuclease TatD">
    <location>
        <begin position="1"/>
        <end position="261"/>
    </location>
</feature>
<feature type="binding site" evidence="1">
    <location>
        <position position="92"/>
    </location>
    <ligand>
        <name>a divalent metal cation</name>
        <dbReference type="ChEBI" id="CHEBI:60240"/>
    </ligand>
</feature>
<feature type="binding site" evidence="1">
    <location>
        <position position="128"/>
    </location>
    <ligand>
        <name>a divalent metal cation</name>
        <dbReference type="ChEBI" id="CHEBI:60240"/>
    </ligand>
</feature>
<feature type="binding site" evidence="1">
    <location>
        <position position="153"/>
    </location>
    <ligand>
        <name>a divalent metal cation</name>
        <dbReference type="ChEBI" id="CHEBI:60240"/>
    </ligand>
</feature>
<accession>D8MKW4</accession>
<name>TATD_ERWBE</name>
<protein>
    <recommendedName>
        <fullName evidence="1">3'-5' ssDNA/RNA exonuclease TatD</fullName>
        <ecNumber evidence="1">3.1.11.-</ecNumber>
        <ecNumber evidence="1">3.1.13.-</ecNumber>
    </recommendedName>
    <alternativeName>
        <fullName evidence="1">DNase TatD</fullName>
    </alternativeName>
</protein>
<gene>
    <name evidence="1" type="primary">tatD</name>
    <name type="ordered locus">EbC_02390</name>
</gene>
<organism>
    <name type="scientific">Erwinia billingiae (strain Eb661)</name>
    <dbReference type="NCBI Taxonomy" id="634500"/>
    <lineage>
        <taxon>Bacteria</taxon>
        <taxon>Pseudomonadati</taxon>
        <taxon>Pseudomonadota</taxon>
        <taxon>Gammaproteobacteria</taxon>
        <taxon>Enterobacterales</taxon>
        <taxon>Erwiniaceae</taxon>
        <taxon>Erwinia</taxon>
    </lineage>
</organism>
<keyword id="KW-0963">Cytoplasm</keyword>
<keyword id="KW-0269">Exonuclease</keyword>
<keyword id="KW-0378">Hydrolase</keyword>
<keyword id="KW-0460">Magnesium</keyword>
<keyword id="KW-0479">Metal-binding</keyword>
<keyword id="KW-0540">Nuclease</keyword>
<keyword id="KW-1185">Reference proteome</keyword>
<reference key="1">
    <citation type="journal article" date="2010" name="BMC Genomics">
        <title>Genome comparison of the epiphytic bacteria Erwinia billingiae and E. tasmaniensis with the pear pathogen E. pyrifoliae.</title>
        <authorList>
            <person name="Kube M."/>
            <person name="Migdoll A.M."/>
            <person name="Gehring I."/>
            <person name="Heitmann K."/>
            <person name="Mayer Y."/>
            <person name="Kuhl H."/>
            <person name="Knaust F."/>
            <person name="Geider K."/>
            <person name="Reinhardt R."/>
        </authorList>
    </citation>
    <scope>NUCLEOTIDE SEQUENCE [LARGE SCALE GENOMIC DNA]</scope>
    <source>
        <strain>Eb661</strain>
    </source>
</reference>
<dbReference type="EC" id="3.1.11.-" evidence="1"/>
<dbReference type="EC" id="3.1.13.-" evidence="1"/>
<dbReference type="EMBL" id="FP236843">
    <property type="protein sequence ID" value="CAX57770.1"/>
    <property type="molecule type" value="Genomic_DNA"/>
</dbReference>
<dbReference type="RefSeq" id="WP_013200277.1">
    <property type="nucleotide sequence ID" value="NC_014306.1"/>
</dbReference>
<dbReference type="SMR" id="D8MKW4"/>
<dbReference type="STRING" id="634500.EbC_02390"/>
<dbReference type="GeneID" id="90510220"/>
<dbReference type="KEGG" id="ebi:EbC_02390"/>
<dbReference type="eggNOG" id="COG0084">
    <property type="taxonomic scope" value="Bacteria"/>
</dbReference>
<dbReference type="HOGENOM" id="CLU_031506_1_2_6"/>
<dbReference type="Proteomes" id="UP000008793">
    <property type="component" value="Chromosome"/>
</dbReference>
<dbReference type="GO" id="GO:0005737">
    <property type="term" value="C:cytoplasm"/>
    <property type="evidence" value="ECO:0007669"/>
    <property type="project" value="UniProtKB-SubCell"/>
</dbReference>
<dbReference type="GO" id="GO:0000175">
    <property type="term" value="F:3'-5'-RNA exonuclease activity"/>
    <property type="evidence" value="ECO:0007669"/>
    <property type="project" value="UniProtKB-UniRule"/>
</dbReference>
<dbReference type="GO" id="GO:0000287">
    <property type="term" value="F:magnesium ion binding"/>
    <property type="evidence" value="ECO:0007669"/>
    <property type="project" value="UniProtKB-UniRule"/>
</dbReference>
<dbReference type="GO" id="GO:0008310">
    <property type="term" value="F:single-stranded DNA 3'-5' DNA exonuclease activity"/>
    <property type="evidence" value="ECO:0007669"/>
    <property type="project" value="UniProtKB-UniRule"/>
</dbReference>
<dbReference type="CDD" id="cd01310">
    <property type="entry name" value="TatD_DNAse"/>
    <property type="match status" value="1"/>
</dbReference>
<dbReference type="FunFam" id="3.20.20.140:FF:000018">
    <property type="entry name" value="3'-5' ssDNA/RNA exonuclease TatD"/>
    <property type="match status" value="1"/>
</dbReference>
<dbReference type="Gene3D" id="3.20.20.140">
    <property type="entry name" value="Metal-dependent hydrolases"/>
    <property type="match status" value="1"/>
</dbReference>
<dbReference type="HAMAP" id="MF_00901">
    <property type="entry name" value="TatD_exonuclease"/>
    <property type="match status" value="1"/>
</dbReference>
<dbReference type="InterPro" id="IPR018228">
    <property type="entry name" value="DNase_TatD-rel_CS"/>
</dbReference>
<dbReference type="InterPro" id="IPR024918">
    <property type="entry name" value="Exonuc_TatD"/>
</dbReference>
<dbReference type="InterPro" id="IPR032466">
    <property type="entry name" value="Metal_Hydrolase"/>
</dbReference>
<dbReference type="InterPro" id="IPR001130">
    <property type="entry name" value="TatD-like"/>
</dbReference>
<dbReference type="InterPro" id="IPR050891">
    <property type="entry name" value="TatD-type_Hydrolase"/>
</dbReference>
<dbReference type="NCBIfam" id="NF007745">
    <property type="entry name" value="PRK10425.1"/>
    <property type="match status" value="1"/>
</dbReference>
<dbReference type="PANTHER" id="PTHR10060:SF15">
    <property type="entry name" value="DEOXYRIBONUCLEASE TATDN1"/>
    <property type="match status" value="1"/>
</dbReference>
<dbReference type="PANTHER" id="PTHR10060">
    <property type="entry name" value="TATD FAMILY DEOXYRIBONUCLEASE"/>
    <property type="match status" value="1"/>
</dbReference>
<dbReference type="Pfam" id="PF01026">
    <property type="entry name" value="TatD_DNase"/>
    <property type="match status" value="1"/>
</dbReference>
<dbReference type="PIRSF" id="PIRSF005902">
    <property type="entry name" value="DNase_TatD"/>
    <property type="match status" value="1"/>
</dbReference>
<dbReference type="SUPFAM" id="SSF51556">
    <property type="entry name" value="Metallo-dependent hydrolases"/>
    <property type="match status" value="1"/>
</dbReference>
<dbReference type="PROSITE" id="PS01090">
    <property type="entry name" value="TATD_2"/>
    <property type="match status" value="1"/>
</dbReference>
<sequence length="261" mass="28754">MFDIGVNLTSTQFAKDRDQVVKRAKDAGITGLLITGTNALESQQAQSLATRRPGYCWSTAGVHPHHASEWSGETAATLKRLAESPEVVAIGECGLDFNRNISEPEQQVYAFNAQLELAAELAMPVFLHCRDAHDRFLAVLTPWLPTLPGAVVHCFTGTREELEACLAAGLSIGITGWVCDERRGVELRELMPLIPADRLLLETDAPYLLPRDMRPRPPSRRNEPCFLPHIVQVVAGLRGEEPEALGRQCDANARKLFRLPA</sequence>
<evidence type="ECO:0000255" key="1">
    <source>
        <dbReference type="HAMAP-Rule" id="MF_00901"/>
    </source>
</evidence>
<proteinExistence type="inferred from homology"/>
<comment type="function">
    <text evidence="1">3'-5' exonuclease that prefers single-stranded DNA and RNA. May play a role in the H(2)O(2)-induced DNA damage repair.</text>
</comment>
<comment type="cofactor">
    <cofactor evidence="1">
        <name>Mg(2+)</name>
        <dbReference type="ChEBI" id="CHEBI:18420"/>
    </cofactor>
</comment>
<comment type="subunit">
    <text evidence="1">Monomer.</text>
</comment>
<comment type="subcellular location">
    <subcellularLocation>
        <location evidence="1">Cytoplasm</location>
    </subcellularLocation>
</comment>
<comment type="similarity">
    <text evidence="1">Belongs to the metallo-dependent hydrolases superfamily. TatD-type hydrolase family. TatD subfamily.</text>
</comment>